<protein>
    <recommendedName>
        <fullName>Heparan sulfate 2-O-sulfotransferase hst-2</fullName>
        <shortName>Heparan sulfotransferase 2</shortName>
        <ecNumber evidence="4">2.8.2.-</ecNumber>
    </recommendedName>
    <alternativeName>
        <fullName>HS2ST1 homolog</fullName>
    </alternativeName>
</protein>
<dbReference type="EC" id="2.8.2.-" evidence="4"/>
<dbReference type="EMBL" id="AY552606">
    <property type="protein sequence ID" value="AAS89253.1"/>
    <property type="molecule type" value="mRNA"/>
</dbReference>
<dbReference type="EMBL" id="Z81479">
    <property type="protein sequence ID" value="CAB03945.2"/>
    <property type="molecule type" value="Genomic_DNA"/>
</dbReference>
<dbReference type="PIR" id="T19735">
    <property type="entry name" value="T19735"/>
</dbReference>
<dbReference type="RefSeq" id="NP_509871.2">
    <property type="nucleotide sequence ID" value="NM_077470.6"/>
</dbReference>
<dbReference type="SMR" id="O17645"/>
<dbReference type="BioGRID" id="46219">
    <property type="interactions" value="1"/>
</dbReference>
<dbReference type="DIP" id="DIP-25527N"/>
<dbReference type="FunCoup" id="O17645">
    <property type="interactions" value="2899"/>
</dbReference>
<dbReference type="STRING" id="6239.C34F6.4.1"/>
<dbReference type="GlyCosmos" id="O17645">
    <property type="glycosylation" value="3 sites, No reported glycans"/>
</dbReference>
<dbReference type="PaxDb" id="6239-C34F6.4"/>
<dbReference type="PeptideAtlas" id="O17645"/>
<dbReference type="EnsemblMetazoa" id="C34F6.4.1">
    <property type="protein sequence ID" value="C34F6.4.1"/>
    <property type="gene ID" value="WBGene00002029"/>
</dbReference>
<dbReference type="GeneID" id="181309"/>
<dbReference type="KEGG" id="cel:CELE_C34F6.4"/>
<dbReference type="UCSC" id="C34F6.4">
    <property type="organism name" value="c. elegans"/>
</dbReference>
<dbReference type="AGR" id="WB:WBGene00002029"/>
<dbReference type="CTD" id="181309"/>
<dbReference type="WormBase" id="C34F6.4">
    <property type="protein sequence ID" value="CE34159"/>
    <property type="gene ID" value="WBGene00002029"/>
    <property type="gene designation" value="hst-2"/>
</dbReference>
<dbReference type="eggNOG" id="KOG3922">
    <property type="taxonomic scope" value="Eukaryota"/>
</dbReference>
<dbReference type="GeneTree" id="ENSGT00530000063408"/>
<dbReference type="HOGENOM" id="CLU_045310_1_2_1"/>
<dbReference type="InParanoid" id="O17645"/>
<dbReference type="OMA" id="PNQIQFV"/>
<dbReference type="OrthoDB" id="10019582at2759"/>
<dbReference type="PhylomeDB" id="O17645"/>
<dbReference type="Reactome" id="R-CEL-2022928">
    <property type="pathway name" value="HS-GAG biosynthesis"/>
</dbReference>
<dbReference type="PRO" id="PR:O17645"/>
<dbReference type="Proteomes" id="UP000001940">
    <property type="component" value="Chromosome X"/>
</dbReference>
<dbReference type="Bgee" id="WBGene00002029">
    <property type="expression patterns" value="Expressed in germ line (C elegans) and 4 other cell types or tissues"/>
</dbReference>
<dbReference type="GO" id="GO:0005794">
    <property type="term" value="C:Golgi apparatus"/>
    <property type="evidence" value="ECO:0000250"/>
    <property type="project" value="WormBase"/>
</dbReference>
<dbReference type="GO" id="GO:0000139">
    <property type="term" value="C:Golgi membrane"/>
    <property type="evidence" value="ECO:0007669"/>
    <property type="project" value="UniProtKB-SubCell"/>
</dbReference>
<dbReference type="GO" id="GO:0004394">
    <property type="term" value="F:heparan sulfate 2-sulfotransferase activity"/>
    <property type="evidence" value="ECO:0000314"/>
    <property type="project" value="WormBase"/>
</dbReference>
<dbReference type="GO" id="GO:0015012">
    <property type="term" value="P:heparan sulfate proteoglycan biosynthetic process"/>
    <property type="evidence" value="ECO:0000314"/>
    <property type="project" value="WormBase"/>
</dbReference>
<dbReference type="GO" id="GO:0040018">
    <property type="term" value="P:positive regulation of multicellular organism growth"/>
    <property type="evidence" value="ECO:0000315"/>
    <property type="project" value="WormBase"/>
</dbReference>
<dbReference type="GO" id="GO:1902667">
    <property type="term" value="P:regulation of axon guidance"/>
    <property type="evidence" value="ECO:0000315"/>
    <property type="project" value="WormBase"/>
</dbReference>
<dbReference type="GO" id="GO:0030334">
    <property type="term" value="P:regulation of cell migration"/>
    <property type="evidence" value="ECO:0000315"/>
    <property type="project" value="WormBase"/>
</dbReference>
<dbReference type="FunFam" id="3.40.50.300:FF:001418">
    <property type="entry name" value="Heparan sulfate 2-o-sulfotransferase"/>
    <property type="match status" value="1"/>
</dbReference>
<dbReference type="Gene3D" id="3.40.50.300">
    <property type="entry name" value="P-loop containing nucleotide triphosphate hydrolases"/>
    <property type="match status" value="1"/>
</dbReference>
<dbReference type="InterPro" id="IPR007734">
    <property type="entry name" value="Heparan_SO4_2-O-STrfase"/>
</dbReference>
<dbReference type="InterPro" id="IPR027417">
    <property type="entry name" value="P-loop_NTPase"/>
</dbReference>
<dbReference type="InterPro" id="IPR005331">
    <property type="entry name" value="Sulfotransferase"/>
</dbReference>
<dbReference type="PANTHER" id="PTHR12129">
    <property type="entry name" value="HEPARAN SULFATE 2-O-SULFOTRANSFERASE"/>
    <property type="match status" value="1"/>
</dbReference>
<dbReference type="PANTHER" id="PTHR12129:SF17">
    <property type="entry name" value="HEPARAN SULFATE 2-O-SULFOTRANSFERASE 1"/>
    <property type="match status" value="1"/>
</dbReference>
<dbReference type="Pfam" id="PF03567">
    <property type="entry name" value="Sulfotransfer_2"/>
    <property type="match status" value="1"/>
</dbReference>
<dbReference type="SUPFAM" id="SSF52540">
    <property type="entry name" value="P-loop containing nucleoside triphosphate hydrolases"/>
    <property type="match status" value="1"/>
</dbReference>
<evidence type="ECO:0000250" key="1"/>
<evidence type="ECO:0000250" key="2">
    <source>
        <dbReference type="UniProtKB" id="A0A8C2LVE3"/>
    </source>
</evidence>
<evidence type="ECO:0000250" key="3">
    <source>
        <dbReference type="UniProtKB" id="Q76KB1"/>
    </source>
</evidence>
<evidence type="ECO:0000250" key="4">
    <source>
        <dbReference type="UniProtKB" id="Q8R3H7"/>
    </source>
</evidence>
<evidence type="ECO:0000255" key="5"/>
<evidence type="ECO:0000269" key="6">
    <source>
    </source>
</evidence>
<evidence type="ECO:0000269" key="7">
    <source>
    </source>
</evidence>
<evidence type="ECO:0000269" key="8">
    <source>
    </source>
</evidence>
<evidence type="ECO:0000305" key="9"/>
<evidence type="ECO:0000312" key="10">
    <source>
        <dbReference type="Proteomes" id="UP000001940"/>
    </source>
</evidence>
<evidence type="ECO:0000312" key="11">
    <source>
        <dbReference type="WormBase" id="C34F6.4"/>
    </source>
</evidence>
<keyword id="KW-0217">Developmental protein</keyword>
<keyword id="KW-1015">Disulfide bond</keyword>
<keyword id="KW-0325">Glycoprotein</keyword>
<keyword id="KW-0333">Golgi apparatus</keyword>
<keyword id="KW-0472">Membrane</keyword>
<keyword id="KW-1185">Reference proteome</keyword>
<keyword id="KW-0735">Signal-anchor</keyword>
<keyword id="KW-0808">Transferase</keyword>
<keyword id="KW-0812">Transmembrane</keyword>
<keyword id="KW-1133">Transmembrane helix</keyword>
<reference key="1">
    <citation type="journal article" date="2004" name="Neuron">
        <title>Differential sulfations and epimerization define heparan sulfate specificity in nervous system development.</title>
        <authorList>
            <person name="Buelow H.E."/>
            <person name="Hobert O."/>
        </authorList>
    </citation>
    <scope>NUCLEOTIDE SEQUENCE [MRNA]</scope>
    <scope>FUNCTION</scope>
</reference>
<reference key="2">
    <citation type="journal article" date="2005" name="Proc. Natl. Acad. Sci. U.S.A.">
        <title>Heparan 2-O-sulfotransferase, hst-2, is essential for normal cell migration in Caenorhabditis elegans.</title>
        <authorList>
            <person name="Kinnunen T."/>
            <person name="Huang Z."/>
            <person name="Townsend J."/>
            <person name="Gatdula M.M."/>
            <person name="Brown J.R."/>
            <person name="Esko J.D."/>
            <person name="Turnbull J.E."/>
        </authorList>
    </citation>
    <scope>NUCLEOTIDE SEQUENCE [MRNA]</scope>
    <scope>FUNCTION</scope>
    <scope>ENZYME ACTIVITY</scope>
    <scope>TISSUE SPECIFICITY</scope>
    <scope>DISRUPTION PHENOTYPE</scope>
</reference>
<reference key="3">
    <citation type="journal article" date="1998" name="Science">
        <title>Genome sequence of the nematode C. elegans: a platform for investigating biology.</title>
        <authorList>
            <consortium name="The C. elegans sequencing consortium"/>
        </authorList>
    </citation>
    <scope>NUCLEOTIDE SEQUENCE [LARGE SCALE GENOMIC DNA]</scope>
    <source>
        <strain>Bristol N2</strain>
    </source>
</reference>
<reference key="4">
    <citation type="journal article" date="2003" name="Biochem. Soc. Trans.">
        <title>Heparan sulphate sulphotransferase expression in mice and Caenorhabditis elegans.</title>
        <authorList>
            <person name="Turnbull J."/>
            <person name="Drummond K."/>
            <person name="Huang Z."/>
            <person name="Kinnunen T."/>
            <person name="Ford-Perriss M."/>
            <person name="Murphy M."/>
            <person name="Guimond S."/>
        </authorList>
    </citation>
    <scope>FUNCTION</scope>
</reference>
<gene>
    <name evidence="11" type="primary">hst-2</name>
    <name evidence="11" type="ORF">C34F6.4</name>
</gene>
<accession>O17645</accession>
<sequence>MLWKKRKVLYFAGISVFILILLLLKLNSKPKANVWPTSSKIVIYNRIPKTGSTTFTNAIAYDLYKENGFSVLHVNMTKNRQVMSLPDQYTFVNNITTWTERLPAFYHGHVAFIDFQRFGIANPIYINIIREPLERLLSHYYFLRYGDNYRIGLKRSRAGNNETFDECYSRGGKDCDMKQMWIQIPYFCGHYHFCTEVGNPEALRVAKQNVLEKYLLVGTTSRMRDMIALLEVTVPDFFKGALGHFDSLDANRAHLRYTKKKIPPNDQTLSMIRRDEVYKMEREFYDFINNLFDAVFKKATNGISKADDLVKLPLQYHFEKIKPS</sequence>
<comment type="function">
    <text evidence="6 7 8">Catalyzes the transfer of sulfate to the C2-position of selected hexuronic acid residues within the maturing heparan sulfate (HS). Involved in cell adhesion and guidance by specifically modifying proteoglycans in the extracellular matrix and on the cell surface that are essential for axon migrations.</text>
</comment>
<comment type="subunit">
    <text evidence="1 3">Homotrimer.</text>
</comment>
<comment type="subcellular location">
    <subcellularLocation>
        <location evidence="4">Golgi apparatus membrane</location>
        <topology evidence="4">Single-pass type II membrane protein</topology>
    </subcellularLocation>
</comment>
<comment type="tissue specificity">
    <text evidence="8">Present in the hypodermis, muscle, distal tip cells (DTCs) and in neurons (at protein level).</text>
</comment>
<comment type="disruption phenotype">
    <text evidence="8">Worms are viable but display axonal and cellular guidance defects in specific neuron classes.</text>
</comment>
<comment type="similarity">
    <text evidence="9">Belongs to the sulfotransferase 3 family.</text>
</comment>
<proteinExistence type="evidence at protein level"/>
<name>HST2_CAEEL</name>
<feature type="chain" id="PRO_0000207679" description="Heparan sulfate 2-O-sulfotransferase hst-2">
    <location>
        <begin position="1"/>
        <end position="324"/>
    </location>
</feature>
<feature type="topological domain" description="Cytoplasmic" evidence="5">
    <location>
        <begin position="1"/>
        <end position="6"/>
    </location>
</feature>
<feature type="transmembrane region" description="Helical; Signal-anchor for type II membrane protein" evidence="5">
    <location>
        <begin position="7"/>
        <end position="24"/>
    </location>
</feature>
<feature type="topological domain" description="Lumenal" evidence="5">
    <location>
        <begin position="25"/>
        <end position="324"/>
    </location>
</feature>
<feature type="active site" evidence="3">
    <location>
        <position position="107"/>
    </location>
</feature>
<feature type="active site" evidence="2">
    <location>
        <position position="109"/>
    </location>
</feature>
<feature type="glycosylation site" description="N-linked (GlcNAc...) asparagine" evidence="5">
    <location>
        <position position="75"/>
    </location>
</feature>
<feature type="glycosylation site" description="N-linked (GlcNAc...) asparagine" evidence="5">
    <location>
        <position position="94"/>
    </location>
</feature>
<feature type="glycosylation site" description="N-linked (GlcNAc...) asparagine" evidence="5">
    <location>
        <position position="161"/>
    </location>
</feature>
<feature type="disulfide bond" evidence="3">
    <location>
        <begin position="167"/>
        <end position="175"/>
    </location>
</feature>
<feature type="disulfide bond" evidence="3">
    <location>
        <begin position="188"/>
        <end position="194"/>
    </location>
</feature>
<organism evidence="10">
    <name type="scientific">Caenorhabditis elegans</name>
    <dbReference type="NCBI Taxonomy" id="6239"/>
    <lineage>
        <taxon>Eukaryota</taxon>
        <taxon>Metazoa</taxon>
        <taxon>Ecdysozoa</taxon>
        <taxon>Nematoda</taxon>
        <taxon>Chromadorea</taxon>
        <taxon>Rhabditida</taxon>
        <taxon>Rhabditina</taxon>
        <taxon>Rhabditomorpha</taxon>
        <taxon>Rhabditoidea</taxon>
        <taxon>Rhabditidae</taxon>
        <taxon>Peloderinae</taxon>
        <taxon>Caenorhabditis</taxon>
    </lineage>
</organism>